<reference key="1">
    <citation type="journal article" date="2005" name="Genome Res.">
        <title>Complete genome sequence of the hyperthermophilic archaeon Thermococcus kodakaraensis KOD1 and comparison with Pyrococcus genomes.</title>
        <authorList>
            <person name="Fukui T."/>
            <person name="Atomi H."/>
            <person name="Kanai T."/>
            <person name="Matsumi R."/>
            <person name="Fujiwara S."/>
            <person name="Imanaka T."/>
        </authorList>
    </citation>
    <scope>NUCLEOTIDE SEQUENCE [LARGE SCALE GENOMIC DNA]</scope>
    <source>
        <strain>ATCC BAA-918 / JCM 12380 / KOD1</strain>
    </source>
</reference>
<reference key="2">
    <citation type="journal article" date="2019" name="Nat. Chem. Biol.">
        <title>Identification of a radical SAM enzyme involved in the synthesis of archaeosine.</title>
        <authorList>
            <person name="Yokogawa T."/>
            <person name="Nomura Y."/>
            <person name="Yasuda A."/>
            <person name="Ogino H."/>
            <person name="Hiura K."/>
            <person name="Nakada S."/>
            <person name="Oka N."/>
            <person name="Ando K."/>
            <person name="Kawamura T."/>
            <person name="Hirata A."/>
            <person name="Hori H."/>
            <person name="Ohno S."/>
        </authorList>
    </citation>
    <scope>FUNCTION</scope>
    <scope>CATALYTIC ACTIVITY</scope>
    <scope>DISRUPTION PHENOTYPE</scope>
    <scope>PATHWAY</scope>
    <scope>INTERACTION WITH RASEA</scope>
    <source>
        <strain>ATCC BAA-918 / JCM 12380 / KOD1</strain>
    </source>
</reference>
<accession>Q5JHG7</accession>
<comment type="function">
    <text evidence="2">Functions in the biosynthesis of archaeosine, a modified nucleoside present in the dihydrouridine loop (D-loop) of archaeal tRNAs. Catalyzes the addition of L-lysine to the cyano group of 7-cyano-7-deazaguanine (preQ0)-modified tRNAs at position 15, to generate q0kN15-tRNA, a q0N lysine adduct identified as 7-N-[(5S)-5-amino-5-carboxypentyl]formamidino-7-deazaguanosine.</text>
</comment>
<comment type="catalytic activity">
    <reaction evidence="2">
        <text>7-cyano-7-carbaguanosine(15) in tRNA + L-lysine = 7-N-[(5S)-5-amino-5-carboxypentyl]formamidino-7-deazaguanosine(15) in tRNA</text>
        <dbReference type="Rhea" id="RHEA:63216"/>
        <dbReference type="Rhea" id="RHEA-COMP:10371"/>
        <dbReference type="Rhea" id="RHEA-COMP:16288"/>
        <dbReference type="ChEBI" id="CHEBI:32551"/>
        <dbReference type="ChEBI" id="CHEBI:82850"/>
        <dbReference type="ChEBI" id="CHEBI:145542"/>
    </reaction>
    <physiologicalReaction direction="left-to-right" evidence="2">
        <dbReference type="Rhea" id="RHEA:63217"/>
    </physiologicalReaction>
</comment>
<comment type="pathway">
    <text evidence="2">tRNA modification; archaeosine-tRNA biosynthesis.</text>
</comment>
<comment type="subunit">
    <text evidence="2">Forms a robust complex with the archaeosine synthase beta subunit RaSEA, likely an alpha(2)beta(2) heterotetrameric structure. Formation of this complex highly increases lysine transfer activity.</text>
</comment>
<comment type="disruption phenotype">
    <text evidence="2">Archaeosine is no more detected among the modified nucleosides in tRNA fractions.</text>
</comment>
<comment type="similarity">
    <text evidence="4">Belongs to the archaeosine synthase type 1 family.</text>
</comment>
<dbReference type="EC" id="4.3.3.-" evidence="2"/>
<dbReference type="EMBL" id="AP006878">
    <property type="protein sequence ID" value="BAD86345.1"/>
    <property type="molecule type" value="Genomic_DNA"/>
</dbReference>
<dbReference type="RefSeq" id="WP_011251106.1">
    <property type="nucleotide sequence ID" value="NC_006624.1"/>
</dbReference>
<dbReference type="SMR" id="Q5JHG7"/>
<dbReference type="FunCoup" id="Q5JHG7">
    <property type="interactions" value="5"/>
</dbReference>
<dbReference type="STRING" id="69014.TK2156"/>
<dbReference type="EnsemblBacteria" id="BAD86345">
    <property type="protein sequence ID" value="BAD86345"/>
    <property type="gene ID" value="TK2156"/>
</dbReference>
<dbReference type="GeneID" id="78448694"/>
<dbReference type="KEGG" id="tko:TK2156"/>
<dbReference type="PATRIC" id="fig|69014.16.peg.2111"/>
<dbReference type="eggNOG" id="arCOG00990">
    <property type="taxonomic scope" value="Archaea"/>
</dbReference>
<dbReference type="HOGENOM" id="CLU_029831_0_0_2"/>
<dbReference type="InParanoid" id="Q5JHG7"/>
<dbReference type="OrthoDB" id="115061at2157"/>
<dbReference type="PhylomeDB" id="Q5JHG7"/>
<dbReference type="BRENDA" id="2.6.1.97">
    <property type="organism ID" value="5246"/>
</dbReference>
<dbReference type="UniPathway" id="UPA00393"/>
<dbReference type="Proteomes" id="UP000000536">
    <property type="component" value="Chromosome"/>
</dbReference>
<dbReference type="GO" id="GO:0005737">
    <property type="term" value="C:cytoplasm"/>
    <property type="evidence" value="ECO:0000318"/>
    <property type="project" value="GO_Central"/>
</dbReference>
<dbReference type="GO" id="GO:0016829">
    <property type="term" value="F:lyase activity"/>
    <property type="evidence" value="ECO:0007669"/>
    <property type="project" value="UniProtKB-KW"/>
</dbReference>
<dbReference type="GO" id="GO:0003723">
    <property type="term" value="F:RNA binding"/>
    <property type="evidence" value="ECO:0007669"/>
    <property type="project" value="InterPro"/>
</dbReference>
<dbReference type="GO" id="GO:0002099">
    <property type="term" value="P:tRNA wobble guanine modification"/>
    <property type="evidence" value="ECO:0000318"/>
    <property type="project" value="GO_Central"/>
</dbReference>
<dbReference type="CDD" id="cd21149">
    <property type="entry name" value="PUA_archaeosine_TGT"/>
    <property type="match status" value="1"/>
</dbReference>
<dbReference type="Gene3D" id="3.10.450.90">
    <property type="entry name" value="ArcTGT, C2 domain"/>
    <property type="match status" value="1"/>
</dbReference>
<dbReference type="Gene3D" id="2.30.130.10">
    <property type="entry name" value="PUA domain"/>
    <property type="match status" value="1"/>
</dbReference>
<dbReference type="Gene3D" id="3.40.50.10630">
    <property type="entry name" value="Uracil-DNA glycosylase-like"/>
    <property type="match status" value="1"/>
</dbReference>
<dbReference type="InterPro" id="IPR053418">
    <property type="entry name" value="Archaeosine_synthase_1"/>
</dbReference>
<dbReference type="InterPro" id="IPR050076">
    <property type="entry name" value="ArchSynthase1/Queuine_TRR"/>
</dbReference>
<dbReference type="InterPro" id="IPR040777">
    <property type="entry name" value="DUF5591"/>
</dbReference>
<dbReference type="InterPro" id="IPR002478">
    <property type="entry name" value="PUA"/>
</dbReference>
<dbReference type="InterPro" id="IPR015947">
    <property type="entry name" value="PUA-like_sf"/>
</dbReference>
<dbReference type="InterPro" id="IPR036974">
    <property type="entry name" value="PUA_sf"/>
</dbReference>
<dbReference type="InterPro" id="IPR036511">
    <property type="entry name" value="TGT-like_sf"/>
</dbReference>
<dbReference type="InterPro" id="IPR038250">
    <property type="entry name" value="TGT_C2_sf"/>
</dbReference>
<dbReference type="InterPro" id="IPR004521">
    <property type="entry name" value="Uncharacterised_CHP00451"/>
</dbReference>
<dbReference type="InterPro" id="IPR036895">
    <property type="entry name" value="Uracil-DNA_glycosylase-like_sf"/>
</dbReference>
<dbReference type="NCBIfam" id="NF040592">
    <property type="entry name" value="tRNA_mod_ArcS"/>
    <property type="match status" value="1"/>
</dbReference>
<dbReference type="NCBIfam" id="TIGR00451">
    <property type="entry name" value="unchar_dom_2"/>
    <property type="match status" value="1"/>
</dbReference>
<dbReference type="PANTHER" id="PTHR46499">
    <property type="entry name" value="QUEUINE TRNA-RIBOSYLTRANSFERASE"/>
    <property type="match status" value="1"/>
</dbReference>
<dbReference type="PANTHER" id="PTHR46499:SF1">
    <property type="entry name" value="QUEUINE TRNA-RIBOSYLTRANSFERASE"/>
    <property type="match status" value="1"/>
</dbReference>
<dbReference type="Pfam" id="PF17884">
    <property type="entry name" value="DUF5591"/>
    <property type="match status" value="1"/>
</dbReference>
<dbReference type="Pfam" id="PF01472">
    <property type="entry name" value="PUA"/>
    <property type="match status" value="1"/>
</dbReference>
<dbReference type="SMART" id="SM00359">
    <property type="entry name" value="PUA"/>
    <property type="match status" value="1"/>
</dbReference>
<dbReference type="SUPFAM" id="SSF88802">
    <property type="entry name" value="Pre-PUA domain"/>
    <property type="match status" value="1"/>
</dbReference>
<dbReference type="SUPFAM" id="SSF88697">
    <property type="entry name" value="PUA domain-like"/>
    <property type="match status" value="1"/>
</dbReference>
<dbReference type="SUPFAM" id="SSF51713">
    <property type="entry name" value="tRNA-guanine transglycosylase"/>
    <property type="match status" value="1"/>
</dbReference>
<dbReference type="SUPFAM" id="SSF52141">
    <property type="entry name" value="Uracil-DNA glycosylase-like"/>
    <property type="match status" value="1"/>
</dbReference>
<dbReference type="PROSITE" id="PS50890">
    <property type="entry name" value="PUA"/>
    <property type="match status" value="1"/>
</dbReference>
<proteinExistence type="evidence at protein level"/>
<feature type="chain" id="PRO_0000450071" description="Archaeosine synthase subunit alpha">
    <location>
        <begin position="1"/>
        <end position="568"/>
    </location>
</feature>
<feature type="domain" description="PUA" evidence="1">
    <location>
        <begin position="496"/>
        <end position="565"/>
    </location>
</feature>
<gene>
    <name evidence="3" type="primary">arcS</name>
    <name evidence="5" type="ordered locus">TK2156</name>
</gene>
<sequence>MEVIKHEGPGRLGVVRLGDYSFRTPALVGIDFTLSPFNSFFHPKEPGEYDFNLAPSIPLGFYTPDEVIQKAIGRLWSVNYDGFNAFYLPALRRTEYLEEFFKIIDRHNFDAVYLGNSKILIKEYRYFVRILRELRERFPNVMIIADLEPFFYPLAVYLGIDAFDTRSLKLYDFEGKGFTQFSPFLWSNEPNSLDFAREVILLVRKALEEGKLRYLVENFFPTQYNAGILRIADLEHPDYLEKYTPIQKETVYFISDASIRRPEVKRWHERVLERFTPPKNVELLLLFPCSAKKPYSFSRSHTLYRRAVKEALGSGTSKVHELILTSPFGVVPREWEWLAKYDIVVTGHWSEEEIKPAAELLAKTLEKYPEDIPIVAHLDEAYVEIAKLASELSGREIIFTDVKNGTTSHESLRSLTETLREFQIEGTKEDRTYRYFENIRKVFDFYFGVGAGEAILPENGQVKGSKMLRIFVEGQQTGTFTDGVISVTPYGMQRIYDALKSYWVKIDFELRGDVFAVGVEEADPRIRPDDIVGIVRDEKVVGVGKAVLSGEEMVRAKKGVAVKVRKRV</sequence>
<organism>
    <name type="scientific">Thermococcus kodakarensis (strain ATCC BAA-918 / JCM 12380 / KOD1)</name>
    <name type="common">Pyrococcus kodakaraensis (strain KOD1)</name>
    <dbReference type="NCBI Taxonomy" id="69014"/>
    <lineage>
        <taxon>Archaea</taxon>
        <taxon>Methanobacteriati</taxon>
        <taxon>Methanobacteriota</taxon>
        <taxon>Thermococci</taxon>
        <taxon>Thermococcales</taxon>
        <taxon>Thermococcaceae</taxon>
        <taxon>Thermococcus</taxon>
    </lineage>
</organism>
<keyword id="KW-0456">Lyase</keyword>
<keyword id="KW-1185">Reference proteome</keyword>
<keyword id="KW-0819">tRNA processing</keyword>
<evidence type="ECO:0000255" key="1">
    <source>
        <dbReference type="PROSITE-ProRule" id="PRU00161"/>
    </source>
</evidence>
<evidence type="ECO:0000269" key="2">
    <source>
    </source>
</evidence>
<evidence type="ECO:0000303" key="3">
    <source>
    </source>
</evidence>
<evidence type="ECO:0000305" key="4"/>
<evidence type="ECO:0000312" key="5">
    <source>
        <dbReference type="EMBL" id="BAD86345.1"/>
    </source>
</evidence>
<name>ARCSA_THEKO</name>
<protein>
    <recommendedName>
        <fullName evidence="3">Archaeosine synthase subunit alpha</fullName>
        <ecNumber evidence="2">4.3.3.-</ecNumber>
    </recommendedName>
    <alternativeName>
        <fullName evidence="3">Archaeosine synthase, lysine transferase subunit</fullName>
    </alternativeName>
</protein>